<feature type="chain" id="PRO_1000061488" description="Putative pre-16S rRNA nuclease">
    <location>
        <begin position="1"/>
        <end position="161"/>
    </location>
</feature>
<gene>
    <name type="ordered locus">BBta_4721</name>
</gene>
<proteinExistence type="inferred from homology"/>
<dbReference type="EC" id="3.1.-.-" evidence="1"/>
<dbReference type="EMBL" id="CP000494">
    <property type="protein sequence ID" value="ABQ36748.1"/>
    <property type="molecule type" value="Genomic_DNA"/>
</dbReference>
<dbReference type="RefSeq" id="WP_012044734.1">
    <property type="nucleotide sequence ID" value="NC_009485.1"/>
</dbReference>
<dbReference type="SMR" id="A5EKQ4"/>
<dbReference type="STRING" id="288000.BBta_4721"/>
<dbReference type="KEGG" id="bbt:BBta_4721"/>
<dbReference type="eggNOG" id="COG0816">
    <property type="taxonomic scope" value="Bacteria"/>
</dbReference>
<dbReference type="HOGENOM" id="CLU_098240_1_1_5"/>
<dbReference type="OrthoDB" id="9796140at2"/>
<dbReference type="Proteomes" id="UP000000246">
    <property type="component" value="Chromosome"/>
</dbReference>
<dbReference type="GO" id="GO:0005829">
    <property type="term" value="C:cytosol"/>
    <property type="evidence" value="ECO:0007669"/>
    <property type="project" value="TreeGrafter"/>
</dbReference>
<dbReference type="GO" id="GO:0004518">
    <property type="term" value="F:nuclease activity"/>
    <property type="evidence" value="ECO:0007669"/>
    <property type="project" value="UniProtKB-KW"/>
</dbReference>
<dbReference type="GO" id="GO:0000967">
    <property type="term" value="P:rRNA 5'-end processing"/>
    <property type="evidence" value="ECO:0007669"/>
    <property type="project" value="UniProtKB-UniRule"/>
</dbReference>
<dbReference type="CDD" id="cd16964">
    <property type="entry name" value="YqgF"/>
    <property type="match status" value="1"/>
</dbReference>
<dbReference type="Gene3D" id="3.30.420.140">
    <property type="entry name" value="YqgF/RNase H-like domain"/>
    <property type="match status" value="1"/>
</dbReference>
<dbReference type="HAMAP" id="MF_00651">
    <property type="entry name" value="Nuclease_YqgF"/>
    <property type="match status" value="1"/>
</dbReference>
<dbReference type="InterPro" id="IPR012337">
    <property type="entry name" value="RNaseH-like_sf"/>
</dbReference>
<dbReference type="InterPro" id="IPR005227">
    <property type="entry name" value="YqgF"/>
</dbReference>
<dbReference type="InterPro" id="IPR006641">
    <property type="entry name" value="YqgF/RNaseH-like_dom"/>
</dbReference>
<dbReference type="InterPro" id="IPR037027">
    <property type="entry name" value="YqgF/RNaseH-like_dom_sf"/>
</dbReference>
<dbReference type="NCBIfam" id="TIGR00250">
    <property type="entry name" value="RNAse_H_YqgF"/>
    <property type="match status" value="1"/>
</dbReference>
<dbReference type="PANTHER" id="PTHR33317">
    <property type="entry name" value="POLYNUCLEOTIDYL TRANSFERASE, RIBONUCLEASE H-LIKE SUPERFAMILY PROTEIN"/>
    <property type="match status" value="1"/>
</dbReference>
<dbReference type="PANTHER" id="PTHR33317:SF4">
    <property type="entry name" value="POLYNUCLEOTIDYL TRANSFERASE, RIBONUCLEASE H-LIKE SUPERFAMILY PROTEIN"/>
    <property type="match status" value="1"/>
</dbReference>
<dbReference type="Pfam" id="PF03652">
    <property type="entry name" value="RuvX"/>
    <property type="match status" value="1"/>
</dbReference>
<dbReference type="SMART" id="SM00732">
    <property type="entry name" value="YqgFc"/>
    <property type="match status" value="1"/>
</dbReference>
<dbReference type="SUPFAM" id="SSF53098">
    <property type="entry name" value="Ribonuclease H-like"/>
    <property type="match status" value="1"/>
</dbReference>
<protein>
    <recommendedName>
        <fullName evidence="1">Putative pre-16S rRNA nuclease</fullName>
        <ecNumber evidence="1">3.1.-.-</ecNumber>
    </recommendedName>
</protein>
<keyword id="KW-0963">Cytoplasm</keyword>
<keyword id="KW-0378">Hydrolase</keyword>
<keyword id="KW-0540">Nuclease</keyword>
<keyword id="KW-1185">Reference proteome</keyword>
<keyword id="KW-0690">Ribosome biogenesis</keyword>
<comment type="function">
    <text evidence="1">Could be a nuclease involved in processing of the 5'-end of pre-16S rRNA.</text>
</comment>
<comment type="subcellular location">
    <subcellularLocation>
        <location evidence="1">Cytoplasm</location>
    </subcellularLocation>
</comment>
<comment type="similarity">
    <text evidence="1">Belongs to the YqgF nuclease family.</text>
</comment>
<name>YQGF_BRASB</name>
<sequence length="161" mass="17348">MPAPILPLIEAASRWPERGALVGLDLGTKTIGVAVSDPDRRLATGVETIQRKAFKADAARLLAISSERKVVGFVLGLPINMDGSEGPRAQSTRAFARNLANLTDLPIGLWDERLSTAAVERELIGMDVSRARRAEVIDTHAAIFILQGALDRLATLRRSGQ</sequence>
<accession>A5EKQ4</accession>
<evidence type="ECO:0000255" key="1">
    <source>
        <dbReference type="HAMAP-Rule" id="MF_00651"/>
    </source>
</evidence>
<reference key="1">
    <citation type="journal article" date="2007" name="Science">
        <title>Legumes symbioses: absence of nod genes in photosynthetic bradyrhizobia.</title>
        <authorList>
            <person name="Giraud E."/>
            <person name="Moulin L."/>
            <person name="Vallenet D."/>
            <person name="Barbe V."/>
            <person name="Cytryn E."/>
            <person name="Avarre J.-C."/>
            <person name="Jaubert M."/>
            <person name="Simon D."/>
            <person name="Cartieaux F."/>
            <person name="Prin Y."/>
            <person name="Bena G."/>
            <person name="Hannibal L."/>
            <person name="Fardoux J."/>
            <person name="Kojadinovic M."/>
            <person name="Vuillet L."/>
            <person name="Lajus A."/>
            <person name="Cruveiller S."/>
            <person name="Rouy Z."/>
            <person name="Mangenot S."/>
            <person name="Segurens B."/>
            <person name="Dossat C."/>
            <person name="Franck W.L."/>
            <person name="Chang W.-S."/>
            <person name="Saunders E."/>
            <person name="Bruce D."/>
            <person name="Richardson P."/>
            <person name="Normand P."/>
            <person name="Dreyfus B."/>
            <person name="Pignol D."/>
            <person name="Stacey G."/>
            <person name="Emerich D."/>
            <person name="Vermeglio A."/>
            <person name="Medigue C."/>
            <person name="Sadowsky M."/>
        </authorList>
    </citation>
    <scope>NUCLEOTIDE SEQUENCE [LARGE SCALE GENOMIC DNA]</scope>
    <source>
        <strain>BTAi1 / ATCC BAA-1182</strain>
    </source>
</reference>
<organism>
    <name type="scientific">Bradyrhizobium sp. (strain BTAi1 / ATCC BAA-1182)</name>
    <dbReference type="NCBI Taxonomy" id="288000"/>
    <lineage>
        <taxon>Bacteria</taxon>
        <taxon>Pseudomonadati</taxon>
        <taxon>Pseudomonadota</taxon>
        <taxon>Alphaproteobacteria</taxon>
        <taxon>Hyphomicrobiales</taxon>
        <taxon>Nitrobacteraceae</taxon>
        <taxon>Bradyrhizobium</taxon>
    </lineage>
</organism>